<reference key="1">
    <citation type="journal article" date="2003" name="Proc. Natl. Acad. Sci. U.S.A.">
        <title>The complete genome sequence of Mycobacterium bovis.</title>
        <authorList>
            <person name="Garnier T."/>
            <person name="Eiglmeier K."/>
            <person name="Camus J.-C."/>
            <person name="Medina N."/>
            <person name="Mansoor H."/>
            <person name="Pryor M."/>
            <person name="Duthoy S."/>
            <person name="Grondin S."/>
            <person name="Lacroix C."/>
            <person name="Monsempe C."/>
            <person name="Simon S."/>
            <person name="Harris B."/>
            <person name="Atkin R."/>
            <person name="Doggett J."/>
            <person name="Mayes R."/>
            <person name="Keating L."/>
            <person name="Wheeler P.R."/>
            <person name="Parkhill J."/>
            <person name="Barrell B.G."/>
            <person name="Cole S.T."/>
            <person name="Gordon S.V."/>
            <person name="Hewinson R.G."/>
        </authorList>
    </citation>
    <scope>NUCLEOTIDE SEQUENCE [LARGE SCALE GENOMIC DNA]</scope>
    <source>
        <strain>ATCC BAA-935 / AF2122/97</strain>
    </source>
</reference>
<reference key="2">
    <citation type="journal article" date="2017" name="Genome Announc.">
        <title>Updated reference genome sequence and annotation of Mycobacterium bovis AF2122/97.</title>
        <authorList>
            <person name="Malone K.M."/>
            <person name="Farrell D."/>
            <person name="Stuber T.P."/>
            <person name="Schubert O.T."/>
            <person name="Aebersold R."/>
            <person name="Robbe-Austerman S."/>
            <person name="Gordon S.V."/>
        </authorList>
    </citation>
    <scope>NUCLEOTIDE SEQUENCE [LARGE SCALE GENOMIC DNA]</scope>
    <scope>GENOME REANNOTATION</scope>
    <source>
        <strain>ATCC BAA-935 / AF2122/97</strain>
    </source>
</reference>
<name>HIP1_MYCBO</name>
<feature type="signal peptide" evidence="3">
    <location>
        <begin position="1"/>
        <end position="30"/>
    </location>
</feature>
<feature type="chain" id="PRO_0000027330" description="Serine protease Hip1">
    <location>
        <begin position="31"/>
        <end position="520"/>
    </location>
</feature>
<feature type="domain" description="AB hydrolase-1" evidence="2">
    <location>
        <begin position="102"/>
        <end position="497"/>
    </location>
</feature>
<feature type="active site" description="Nucleophile" evidence="1">
    <location>
        <position position="228"/>
    </location>
</feature>
<feature type="active site" evidence="1">
    <location>
        <position position="463"/>
    </location>
</feature>
<feature type="active site" description="Proton donor" evidence="1">
    <location>
        <position position="490"/>
    </location>
</feature>
<feature type="lipid moiety-binding region" description="N-palmitoyl cysteine" evidence="3">
    <location>
        <position position="31"/>
    </location>
</feature>
<feature type="lipid moiety-binding region" description="S-diacylglycerol cysteine" evidence="3">
    <location>
        <position position="31"/>
    </location>
</feature>
<evidence type="ECO:0000250" key="1">
    <source>
        <dbReference type="UniProtKB" id="P9WHR3"/>
    </source>
</evidence>
<evidence type="ECO:0000255" key="2"/>
<evidence type="ECO:0000255" key="3">
    <source>
        <dbReference type="PROSITE-ProRule" id="PRU00303"/>
    </source>
</evidence>
<evidence type="ECO:0000305" key="4"/>
<gene>
    <name evidence="1" type="primary">hip1</name>
    <name type="ordered locus">BQ2027_MB2248C</name>
</gene>
<comment type="function">
    <text evidence="1">Serine protease that promotes pathogenesis by promoting the processing and the extracellular release of the M.bovis heat-shock protein GroEL2.</text>
</comment>
<comment type="function">
    <text evidence="1">Key immunomodulatory virulence factor, which promotes survival in host macrophages and modulates host immune responses.</text>
</comment>
<comment type="subcellular location">
    <subcellularLocation>
        <location evidence="1">Cell envelope</location>
    </subcellularLocation>
    <subcellularLocation>
        <location evidence="3">Cell membrane</location>
        <topology evidence="3">Lipid-anchor</topology>
    </subcellularLocation>
</comment>
<comment type="similarity">
    <text evidence="4">Belongs to the peptidase S33 family.</text>
</comment>
<sequence length="520" mass="55924">MGMRLSRRDKIARMLLIWAALAAVALVLVGCIRVVGGRARMAEPKLGQPVEWTPCRSSNPQVKIPGGALCGKLAVPVDYDRPDGDVAALALIRFPATGDKIGSLVINPGGPGESGIEAALGVFQTLPKRVHERFDLVGFDPRGVASSRPAIWCNSDADNDRLRAEPQVDYSREGVAHIENETKQFVGRCVDKMGKNFLAHVGTVNVAKDLDAIRAALGDDKLTYLGYSYGTRIGSAYAEEFPQRVRAMILDGAVDPNADPIEAELRQAKGFQDAFNNYAADCAKNAGCPLGADPAKAVEVYHSLVDPLVDPDNPRISRPARTKDPRGLSYSDAIVGTIMALYSPNLWQHLTDGLSELVDNRGDTLLALADMYMRRDSHGRYNNSGDARVAINCVDQPPVTDRDKVIDEDRRAREIAPFMSYGKFTGDAPLGTCAFWPVPPTSQPHAVSAPGLVPTVVVSTTHDPATPYKAGVDLANQLRGSLLTFDGTQHTVVFQGDSCIDEYVTAYLIGGTTPPSGAKC</sequence>
<accession>P65824</accession>
<accession>A0A1R3Y0R1</accession>
<accession>Q10509</accession>
<accession>X2BJM9</accession>
<protein>
    <recommendedName>
        <fullName evidence="1">Serine protease Hip1</fullName>
        <ecNumber evidence="1">3.4.21.-</ecNumber>
    </recommendedName>
</protein>
<dbReference type="EC" id="3.4.21.-" evidence="1"/>
<dbReference type="EMBL" id="LT708304">
    <property type="protein sequence ID" value="SIU00856.1"/>
    <property type="molecule type" value="Genomic_DNA"/>
</dbReference>
<dbReference type="RefSeq" id="NP_855897.1">
    <property type="nucleotide sequence ID" value="NC_002945.3"/>
</dbReference>
<dbReference type="SMR" id="P65824"/>
<dbReference type="ESTHER" id="myctu-ym24">
    <property type="family name" value="Tiancimycin-TnmK-Tripeptidase-HIP"/>
</dbReference>
<dbReference type="MEROPS" id="S33.023"/>
<dbReference type="KEGG" id="mbo:BQ2027_MB2248C"/>
<dbReference type="PATRIC" id="fig|233413.5.peg.2465"/>
<dbReference type="Proteomes" id="UP000001419">
    <property type="component" value="Chromosome"/>
</dbReference>
<dbReference type="GO" id="GO:0030313">
    <property type="term" value="C:cell envelope"/>
    <property type="evidence" value="ECO:0007669"/>
    <property type="project" value="UniProtKB-SubCell"/>
</dbReference>
<dbReference type="GO" id="GO:0005886">
    <property type="term" value="C:plasma membrane"/>
    <property type="evidence" value="ECO:0007669"/>
    <property type="project" value="UniProtKB-SubCell"/>
</dbReference>
<dbReference type="GO" id="GO:0016787">
    <property type="term" value="F:hydrolase activity"/>
    <property type="evidence" value="ECO:0007669"/>
    <property type="project" value="UniProtKB-KW"/>
</dbReference>
<dbReference type="Gene3D" id="3.40.50.1820">
    <property type="entry name" value="alpha/beta hydrolase"/>
    <property type="match status" value="1"/>
</dbReference>
<dbReference type="InterPro" id="IPR000073">
    <property type="entry name" value="AB_hydrolase_1"/>
</dbReference>
<dbReference type="InterPro" id="IPR029058">
    <property type="entry name" value="AB_hydrolase_fold"/>
</dbReference>
<dbReference type="InterPro" id="IPR051601">
    <property type="entry name" value="Serine_prot/Carboxylest_S33"/>
</dbReference>
<dbReference type="PANTHER" id="PTHR43248">
    <property type="entry name" value="2-SUCCINYL-6-HYDROXY-2,4-CYCLOHEXADIENE-1-CARBOXYLATE SYNTHASE"/>
    <property type="match status" value="1"/>
</dbReference>
<dbReference type="PANTHER" id="PTHR43248:SF29">
    <property type="entry name" value="TRIPEPTIDYL AMINOPEPTIDASE"/>
    <property type="match status" value="1"/>
</dbReference>
<dbReference type="Pfam" id="PF00561">
    <property type="entry name" value="Abhydrolase_1"/>
    <property type="match status" value="1"/>
</dbReference>
<dbReference type="SUPFAM" id="SSF53474">
    <property type="entry name" value="alpha/beta-Hydrolases"/>
    <property type="match status" value="1"/>
</dbReference>
<dbReference type="PROSITE" id="PS51257">
    <property type="entry name" value="PROKAR_LIPOPROTEIN"/>
    <property type="match status" value="1"/>
</dbReference>
<organism>
    <name type="scientific">Mycobacterium bovis (strain ATCC BAA-935 / AF2122/97)</name>
    <dbReference type="NCBI Taxonomy" id="233413"/>
    <lineage>
        <taxon>Bacteria</taxon>
        <taxon>Bacillati</taxon>
        <taxon>Actinomycetota</taxon>
        <taxon>Actinomycetes</taxon>
        <taxon>Mycobacteriales</taxon>
        <taxon>Mycobacteriaceae</taxon>
        <taxon>Mycobacterium</taxon>
        <taxon>Mycobacterium tuberculosis complex</taxon>
    </lineage>
</organism>
<proteinExistence type="inferred from homology"/>
<keyword id="KW-1003">Cell membrane</keyword>
<keyword id="KW-0378">Hydrolase</keyword>
<keyword id="KW-0449">Lipoprotein</keyword>
<keyword id="KW-0472">Membrane</keyword>
<keyword id="KW-0564">Palmitate</keyword>
<keyword id="KW-1185">Reference proteome</keyword>
<keyword id="KW-0732">Signal</keyword>